<feature type="chain" id="PRO_0000049647" description="Sporulation inhibitor of replication protein SirA">
    <location>
        <begin position="1"/>
        <end position="148"/>
    </location>
</feature>
<feature type="mutagenesis site" description="No longer localizes to mid-cell during sporulation, not toxic in growing cells, 2.5-fold reduced interaction with domain I of DnaA in E.coli." evidence="4">
    <original>Y</original>
    <variation>A</variation>
    <location>
        <position position="18"/>
    </location>
</feature>
<feature type="strand" evidence="12">
    <location>
        <begin position="3"/>
        <end position="10"/>
    </location>
</feature>
<feature type="helix" evidence="12">
    <location>
        <begin position="12"/>
        <end position="17"/>
    </location>
</feature>
<feature type="turn" evidence="12">
    <location>
        <begin position="18"/>
        <end position="20"/>
    </location>
</feature>
<feature type="helix" evidence="12">
    <location>
        <begin position="22"/>
        <end position="33"/>
    </location>
</feature>
<feature type="helix" evidence="12">
    <location>
        <begin position="39"/>
        <end position="52"/>
    </location>
</feature>
<feature type="helix" evidence="12">
    <location>
        <begin position="58"/>
        <end position="69"/>
    </location>
</feature>
<feature type="strand" evidence="12">
    <location>
        <begin position="72"/>
        <end position="77"/>
    </location>
</feature>
<feature type="strand" evidence="12">
    <location>
        <begin position="80"/>
        <end position="84"/>
    </location>
</feature>
<feature type="helix" evidence="12">
    <location>
        <begin position="86"/>
        <end position="88"/>
    </location>
</feature>
<feature type="strand" evidence="12">
    <location>
        <begin position="90"/>
        <end position="97"/>
    </location>
</feature>
<feature type="strand" evidence="12">
    <location>
        <begin position="100"/>
        <end position="108"/>
    </location>
</feature>
<feature type="helix" evidence="12">
    <location>
        <begin position="110"/>
        <end position="122"/>
    </location>
</feature>
<feature type="strand" evidence="12">
    <location>
        <begin position="126"/>
        <end position="130"/>
    </location>
</feature>
<feature type="turn" evidence="12">
    <location>
        <begin position="131"/>
        <end position="134"/>
    </location>
</feature>
<feature type="strand" evidence="12">
    <location>
        <begin position="135"/>
        <end position="138"/>
    </location>
</feature>
<gene>
    <name evidence="6" type="primary">sirA</name>
    <name evidence="8" type="synonym">orf148</name>
    <name evidence="9" type="synonym">pcfA</name>
    <name evidence="7" type="synonym">yneE</name>
    <name evidence="7" type="synonym">yoxF</name>
    <name type="ordered locus">BSU17900</name>
</gene>
<reference key="1">
    <citation type="journal article" date="1997" name="J. Bacteriol.">
        <title>Identification and characterization of the ccdA gene, required for cytochrome c synthesis in Bacillus subtilis.</title>
        <authorList>
            <person name="Schioett T."/>
            <person name="von Wachenfeldt C."/>
            <person name="Hederstedt L."/>
        </authorList>
    </citation>
    <scope>NUCLEOTIDE SEQUENCE [GENOMIC DNA]</scope>
    <source>
        <strain>168</strain>
    </source>
</reference>
<reference key="2">
    <citation type="journal article" date="1996" name="Microbiology">
        <title>New genes in the 170 degrees region of the Bacillus subtilis genome encode DNA gyrase subunits, a thioredoxin, a xylanase and an amino acid transporter.</title>
        <authorList>
            <person name="Rose M."/>
            <person name="Entian K.-D."/>
        </authorList>
    </citation>
    <scope>NUCLEOTIDE SEQUENCE [GENOMIC DNA]</scope>
    <source>
        <strain>168</strain>
    </source>
</reference>
<reference key="3">
    <citation type="journal article" date="1997" name="Nature">
        <title>The complete genome sequence of the Gram-positive bacterium Bacillus subtilis.</title>
        <authorList>
            <person name="Kunst F."/>
            <person name="Ogasawara N."/>
            <person name="Moszer I."/>
            <person name="Albertini A.M."/>
            <person name="Alloni G."/>
            <person name="Azevedo V."/>
            <person name="Bertero M.G."/>
            <person name="Bessieres P."/>
            <person name="Bolotin A."/>
            <person name="Borchert S."/>
            <person name="Borriss R."/>
            <person name="Boursier L."/>
            <person name="Brans A."/>
            <person name="Braun M."/>
            <person name="Brignell S.C."/>
            <person name="Bron S."/>
            <person name="Brouillet S."/>
            <person name="Bruschi C.V."/>
            <person name="Caldwell B."/>
            <person name="Capuano V."/>
            <person name="Carter N.M."/>
            <person name="Choi S.-K."/>
            <person name="Codani J.-J."/>
            <person name="Connerton I.F."/>
            <person name="Cummings N.J."/>
            <person name="Daniel R.A."/>
            <person name="Denizot F."/>
            <person name="Devine K.M."/>
            <person name="Duesterhoeft A."/>
            <person name="Ehrlich S.D."/>
            <person name="Emmerson P.T."/>
            <person name="Entian K.-D."/>
            <person name="Errington J."/>
            <person name="Fabret C."/>
            <person name="Ferrari E."/>
            <person name="Foulger D."/>
            <person name="Fritz C."/>
            <person name="Fujita M."/>
            <person name="Fujita Y."/>
            <person name="Fuma S."/>
            <person name="Galizzi A."/>
            <person name="Galleron N."/>
            <person name="Ghim S.-Y."/>
            <person name="Glaser P."/>
            <person name="Goffeau A."/>
            <person name="Golightly E.J."/>
            <person name="Grandi G."/>
            <person name="Guiseppi G."/>
            <person name="Guy B.J."/>
            <person name="Haga K."/>
            <person name="Haiech J."/>
            <person name="Harwood C.R."/>
            <person name="Henaut A."/>
            <person name="Hilbert H."/>
            <person name="Holsappel S."/>
            <person name="Hosono S."/>
            <person name="Hullo M.-F."/>
            <person name="Itaya M."/>
            <person name="Jones L.-M."/>
            <person name="Joris B."/>
            <person name="Karamata D."/>
            <person name="Kasahara Y."/>
            <person name="Klaerr-Blanchard M."/>
            <person name="Klein C."/>
            <person name="Kobayashi Y."/>
            <person name="Koetter P."/>
            <person name="Koningstein G."/>
            <person name="Krogh S."/>
            <person name="Kumano M."/>
            <person name="Kurita K."/>
            <person name="Lapidus A."/>
            <person name="Lardinois S."/>
            <person name="Lauber J."/>
            <person name="Lazarevic V."/>
            <person name="Lee S.-M."/>
            <person name="Levine A."/>
            <person name="Liu H."/>
            <person name="Masuda S."/>
            <person name="Mauel C."/>
            <person name="Medigue C."/>
            <person name="Medina N."/>
            <person name="Mellado R.P."/>
            <person name="Mizuno M."/>
            <person name="Moestl D."/>
            <person name="Nakai S."/>
            <person name="Noback M."/>
            <person name="Noone D."/>
            <person name="O'Reilly M."/>
            <person name="Ogawa K."/>
            <person name="Ogiwara A."/>
            <person name="Oudega B."/>
            <person name="Park S.-H."/>
            <person name="Parro V."/>
            <person name="Pohl T.M."/>
            <person name="Portetelle D."/>
            <person name="Porwollik S."/>
            <person name="Prescott A.M."/>
            <person name="Presecan E."/>
            <person name="Pujic P."/>
            <person name="Purnelle B."/>
            <person name="Rapoport G."/>
            <person name="Rey M."/>
            <person name="Reynolds S."/>
            <person name="Rieger M."/>
            <person name="Rivolta C."/>
            <person name="Rocha E."/>
            <person name="Roche B."/>
            <person name="Rose M."/>
            <person name="Sadaie Y."/>
            <person name="Sato T."/>
            <person name="Scanlan E."/>
            <person name="Schleich S."/>
            <person name="Schroeter R."/>
            <person name="Scoffone F."/>
            <person name="Sekiguchi J."/>
            <person name="Sekowska A."/>
            <person name="Seror S.J."/>
            <person name="Serror P."/>
            <person name="Shin B.-S."/>
            <person name="Soldo B."/>
            <person name="Sorokin A."/>
            <person name="Tacconi E."/>
            <person name="Takagi T."/>
            <person name="Takahashi H."/>
            <person name="Takemaru K."/>
            <person name="Takeuchi M."/>
            <person name="Tamakoshi A."/>
            <person name="Tanaka T."/>
            <person name="Terpstra P."/>
            <person name="Tognoni A."/>
            <person name="Tosato V."/>
            <person name="Uchiyama S."/>
            <person name="Vandenbol M."/>
            <person name="Vannier F."/>
            <person name="Vassarotti A."/>
            <person name="Viari A."/>
            <person name="Wambutt R."/>
            <person name="Wedler E."/>
            <person name="Wedler H."/>
            <person name="Weitzenegger T."/>
            <person name="Winters P."/>
            <person name="Wipat A."/>
            <person name="Yamamoto H."/>
            <person name="Yamane K."/>
            <person name="Yasumoto K."/>
            <person name="Yata K."/>
            <person name="Yoshida K."/>
            <person name="Yoshikawa H.-F."/>
            <person name="Zumstein E."/>
            <person name="Yoshikawa H."/>
            <person name="Danchin A."/>
        </authorList>
    </citation>
    <scope>NUCLEOTIDE SEQUENCE [LARGE SCALE GENOMIC DNA]</scope>
    <source>
        <strain>168</strain>
    </source>
</reference>
<reference key="4">
    <citation type="journal article" date="2009" name="J. Bacteriol.">
        <title>The conserved sporulation protein yneE inhibits DNA replication in Bacillus subtilis.</title>
        <authorList>
            <person name="Rahn-Lee L."/>
            <person name="Gorbatyuk B."/>
            <person name="Skovgaard O."/>
            <person name="Losick R."/>
        </authorList>
    </citation>
    <scope>FUNCTION AS AN INHIBITOR OF DNA REPLICATION</scope>
    <scope>INDUCTION</scope>
    <scope>DISRUPTION PHENOTYPE</scope>
    <source>
        <strain>168 / YB886 / BG214</strain>
    </source>
</reference>
<reference key="5">
    <citation type="journal article" date="2009" name="Mol. Microbiol.">
        <title>SirA enforces diploidy by inhibiting the replication initiator DnaA during spore formation in Bacillus subtilis.</title>
        <authorList>
            <person name="Wagner J.K."/>
            <person name="Marquis K.A."/>
            <person name="Rudner D.Z."/>
        </authorList>
    </citation>
    <scope>FUNCTION DURING SPORULATION</scope>
    <scope>INTERACTION WITH DNAA</scope>
    <scope>DISRUPTION PHENOTYPE</scope>
    <source>
        <strain>168 / PY79</strain>
    </source>
</reference>
<reference key="6">
    <citation type="journal article" date="2011" name="J. Bacteriol.">
        <title>The sporulation protein SirA inhibits the binding of DnaA to the origin of replication by contacting a patch of clustered amino acids.</title>
        <authorList>
            <person name="Rahn-Lee L."/>
            <person name="Merrikh H."/>
            <person name="Grossman A.D."/>
            <person name="Losick R."/>
        </authorList>
    </citation>
    <scope>FUNCTION</scope>
    <scope>INTERACTION WITH DNAA</scope>
    <scope>DISRUPTION PHENOTYPE</scope>
    <source>
        <strain>168 / PY79</strain>
    </source>
</reference>
<reference key="7">
    <citation type="journal article" date="2023" name="Nucleic Acids Res.">
        <title>SirA inhibits the essential DnaA:DnaD interaction to block helicase recruitment during Bacillus subtilis sporulation.</title>
        <authorList>
            <person name="Winterhalter C."/>
            <person name="Stevens D."/>
            <person name="Fenyk S."/>
            <person name="Pelliciari S."/>
            <person name="Marchand E."/>
            <person name="Soultanas P."/>
            <person name="Ilangovan A."/>
            <person name="Murray H."/>
        </authorList>
    </citation>
    <scope>FUNCTION</scope>
    <scope>SUBUNIT</scope>
    <scope>INTERACTION WITH DNAA</scope>
    <scope>DISRUPTION PHENOTYPE</scope>
</reference>
<reference evidence="11" key="8">
    <citation type="journal article" date="2014" name="Mol. Microbiol.">
        <title>Structure and interactions of the Bacillus subtilis sporulation inhibitor of DNA replication, SirA, with domain I of DnaA.</title>
        <authorList>
            <person name="Jameson K.H."/>
            <person name="Rostami N."/>
            <person name="Fogg M.J."/>
            <person name="Turkenburg J.P."/>
            <person name="Grahl A."/>
            <person name="Murray H."/>
            <person name="Wilkinson A.J."/>
        </authorList>
    </citation>
    <scope>X-RAY CRYSTALLOGRAPHY (1.65 ANGSTROMS) IN COMPLEX WITH DNAA DOMAIN I</scope>
    <scope>FUNCTION</scope>
    <scope>SUBUNIT</scope>
    <scope>SUBCELLULAR LOCATION</scope>
    <scope>INDUCTION</scope>
    <scope>MUTAGENESIS OF TYR-18</scope>
</reference>
<dbReference type="EMBL" id="X87845">
    <property type="protein sequence ID" value="CAA61114.1"/>
    <property type="molecule type" value="Genomic_DNA"/>
</dbReference>
<dbReference type="EMBL" id="Z73234">
    <property type="protein sequence ID" value="CAA97617.1"/>
    <property type="molecule type" value="Genomic_DNA"/>
</dbReference>
<dbReference type="EMBL" id="AL009126">
    <property type="protein sequence ID" value="CAB13674.1"/>
    <property type="molecule type" value="Genomic_DNA"/>
</dbReference>
<dbReference type="PIR" id="S57402">
    <property type="entry name" value="S57402"/>
</dbReference>
<dbReference type="RefSeq" id="NP_389673.1">
    <property type="nucleotide sequence ID" value="NC_000964.3"/>
</dbReference>
<dbReference type="RefSeq" id="WP_003231591.1">
    <property type="nucleotide sequence ID" value="NZ_OZ025638.1"/>
</dbReference>
<dbReference type="PDB" id="4TPS">
    <property type="method" value="X-ray"/>
    <property type="resolution" value="1.65 A"/>
    <property type="chains" value="A/C=1-148"/>
</dbReference>
<dbReference type="PDBsum" id="4TPS"/>
<dbReference type="SMR" id="P45707"/>
<dbReference type="FunCoup" id="P45707">
    <property type="interactions" value="10"/>
</dbReference>
<dbReference type="IntAct" id="P45707">
    <property type="interactions" value="1"/>
</dbReference>
<dbReference type="STRING" id="224308.BSU17900"/>
<dbReference type="PaxDb" id="224308-BSU17900"/>
<dbReference type="EnsemblBacteria" id="CAB13674">
    <property type="protein sequence ID" value="CAB13674"/>
    <property type="gene ID" value="BSU_17900"/>
</dbReference>
<dbReference type="GeneID" id="86873695"/>
<dbReference type="GeneID" id="936340"/>
<dbReference type="KEGG" id="bsu:BSU17900"/>
<dbReference type="PATRIC" id="fig|224308.179.peg.1951"/>
<dbReference type="eggNOG" id="ENOG5033MW4">
    <property type="taxonomic scope" value="Bacteria"/>
</dbReference>
<dbReference type="InParanoid" id="P45707"/>
<dbReference type="OrthoDB" id="2736584at2"/>
<dbReference type="BioCyc" id="BSUB:BSU17900-MONOMER"/>
<dbReference type="EvolutionaryTrace" id="P45707"/>
<dbReference type="Proteomes" id="UP000001570">
    <property type="component" value="Chromosome"/>
</dbReference>
<dbReference type="GO" id="GO:0005737">
    <property type="term" value="C:cytoplasm"/>
    <property type="evidence" value="ECO:0007669"/>
    <property type="project" value="UniProtKB-SubCell"/>
</dbReference>
<dbReference type="GO" id="GO:0008156">
    <property type="term" value="P:negative regulation of DNA replication"/>
    <property type="evidence" value="ECO:0007669"/>
    <property type="project" value="UniProtKB-KW"/>
</dbReference>
<dbReference type="GO" id="GO:0030435">
    <property type="term" value="P:sporulation resulting in formation of a cellular spore"/>
    <property type="evidence" value="ECO:0007669"/>
    <property type="project" value="UniProtKB-KW"/>
</dbReference>
<dbReference type="Gene3D" id="3.30.310.250">
    <property type="entry name" value="Sporulation inhibitor of replication protein SirA"/>
    <property type="match status" value="1"/>
</dbReference>
<dbReference type="InterPro" id="IPR019683">
    <property type="entry name" value="SirA"/>
</dbReference>
<dbReference type="InterPro" id="IPR038449">
    <property type="entry name" value="SirA_sf"/>
</dbReference>
<dbReference type="Pfam" id="PF10747">
    <property type="entry name" value="SirA"/>
    <property type="match status" value="1"/>
</dbReference>
<comment type="function">
    <text evidence="1 2 3 4 5">Inhibits DNA replication initiation during sporulation, preventing overinitiation and thus enforcing diploidy; probably the main regulator of sporulation replication initiation under Spo0A control (PubMed:19682252). During sporulation SirA prevents DnaA association with the replication origin to prevent excessive chromosome replication (PubMed:19682252, PubMed:21239581). Alternatively SirA binds to domain I of DnaA and prevent its interaction with DnaD, preventing DNA replication initiation (PubMed:36416272). Upon ectopic expression during vegetative growth reduces chromosome copy number, leading to elongated cells with that can have a single nucleoid or be anucleate (PubMed:19329632, PubMed:19682252, PubMed:25041308). Ectopic expression during vegetative growth blocks DnaA at oriC while blocking recruitment of DnaD to oriC (PubMed:36416272). Plays a significant role during the onset of sporulation (PubMed:19682252).</text>
</comment>
<comment type="subunit">
    <text evidence="2 3 4 5">Interacts with DnaA (PubMed:19682252, PubMed:36416272). Forms a 1:1 complex with domain I of DnaA (PubMed:21239581, PubMed:25041308).</text>
</comment>
<comment type="subcellular location">
    <subcellularLocation>
        <location evidence="4">Cytoplasm</location>
    </subcellularLocation>
    <text evidence="4">Localized at mid-cell in sporulating cells, not at the origin of replication, colocalizes with the replisome (the beta-sliding clamp subunit, DnaN).</text>
</comment>
<comment type="induction">
    <text evidence="1 4">Up-regulated by spo0A (PubMed:19329632). Expressed during sporulation, commencing between 90 and 120 minutes after sporulation induction in about 20% of the cells (at protein level) (PubMed:25041308).</text>
</comment>
<comment type="disruption phenotype">
    <text evidence="1 2 5">Increases the number of observed replication origins (PubMed:19329632, PubMed:19682252). 15% reduction in sporulation efficiency, chromosomes continue to replicate during sporulation (PubMed:19682252). Both DnaA and DnaD rest longer than normal at oriC during sporulation onset, more sporulating cells have active replisomes (PubMed:36416272).</text>
</comment>
<comment type="similarity">
    <text evidence="10">Belongs to the SirA family.</text>
</comment>
<keyword id="KW-0002">3D-structure</keyword>
<keyword id="KW-0963">Cytoplasm</keyword>
<keyword id="KW-0236">DNA replication inhibitor</keyword>
<keyword id="KW-1185">Reference proteome</keyword>
<keyword id="KW-0749">Sporulation</keyword>
<accession>P45707</accession>
<organism>
    <name type="scientific">Bacillus subtilis (strain 168)</name>
    <dbReference type="NCBI Taxonomy" id="224308"/>
    <lineage>
        <taxon>Bacteria</taxon>
        <taxon>Bacillati</taxon>
        <taxon>Bacillota</taxon>
        <taxon>Bacilli</taxon>
        <taxon>Bacillales</taxon>
        <taxon>Bacillaceae</taxon>
        <taxon>Bacillus</taxon>
    </lineage>
</organism>
<protein>
    <recommendedName>
        <fullName evidence="6">Sporulation inhibitor of replication protein SirA</fullName>
    </recommendedName>
</protein>
<name>SIRA_BACSU</name>
<proteinExistence type="evidence at protein level"/>
<sequence length="148" mass="18142">MERHYYTYLIKEEFANHYFGRESVMFELFQDYHWTSLEKQQYEMTEKQIQYITQPIPILHMHQRLKMNLNKTDYRQLDYIYRIALPKAKGHATFMMKEHMIEIVASGDYEAETIFFEVLRKVSPCFLAMDFNSKRYGWLNPVKERNFV</sequence>
<evidence type="ECO:0000269" key="1">
    <source>
    </source>
</evidence>
<evidence type="ECO:0000269" key="2">
    <source>
    </source>
</evidence>
<evidence type="ECO:0000269" key="3">
    <source>
    </source>
</evidence>
<evidence type="ECO:0000269" key="4">
    <source>
    </source>
</evidence>
<evidence type="ECO:0000269" key="5">
    <source>
    </source>
</evidence>
<evidence type="ECO:0000303" key="6">
    <source>
    </source>
</evidence>
<evidence type="ECO:0000303" key="7">
    <source>
    </source>
</evidence>
<evidence type="ECO:0000303" key="8">
    <source>
    </source>
</evidence>
<evidence type="ECO:0000303" key="9">
    <source>
    </source>
</evidence>
<evidence type="ECO:0000305" key="10"/>
<evidence type="ECO:0007744" key="11">
    <source>
        <dbReference type="PDB" id="4TPS"/>
    </source>
</evidence>
<evidence type="ECO:0007829" key="12">
    <source>
        <dbReference type="PDB" id="4TPS"/>
    </source>
</evidence>